<dbReference type="EMBL" id="AE006914">
    <property type="protein sequence ID" value="AAL03212.1"/>
    <property type="molecule type" value="Genomic_DNA"/>
</dbReference>
<dbReference type="PIR" id="B97784">
    <property type="entry name" value="B97784"/>
</dbReference>
<dbReference type="RefSeq" id="WP_010977298.1">
    <property type="nucleotide sequence ID" value="NC_003103.1"/>
</dbReference>
<dbReference type="SMR" id="Q92HU7"/>
<dbReference type="GeneID" id="927753"/>
<dbReference type="KEGG" id="rco:RC0674"/>
<dbReference type="PATRIC" id="fig|272944.4.peg.765"/>
<dbReference type="HOGENOM" id="CLU_061901_2_2_5"/>
<dbReference type="Proteomes" id="UP000000816">
    <property type="component" value="Chromosome"/>
</dbReference>
<dbReference type="GO" id="GO:0042586">
    <property type="term" value="F:peptide deformylase activity"/>
    <property type="evidence" value="ECO:0007669"/>
    <property type="project" value="UniProtKB-UniRule"/>
</dbReference>
<dbReference type="GO" id="GO:0006412">
    <property type="term" value="P:translation"/>
    <property type="evidence" value="ECO:0007669"/>
    <property type="project" value="UniProtKB-UniRule"/>
</dbReference>
<dbReference type="CDD" id="cd00487">
    <property type="entry name" value="Pep_deformylase"/>
    <property type="match status" value="1"/>
</dbReference>
<dbReference type="Gene3D" id="3.90.45.10">
    <property type="entry name" value="Peptide deformylase"/>
    <property type="match status" value="1"/>
</dbReference>
<dbReference type="HAMAP" id="MF_00163">
    <property type="entry name" value="Pep_deformylase"/>
    <property type="match status" value="1"/>
</dbReference>
<dbReference type="InterPro" id="IPR023635">
    <property type="entry name" value="Peptide_deformylase"/>
</dbReference>
<dbReference type="InterPro" id="IPR036821">
    <property type="entry name" value="Peptide_deformylase_sf"/>
</dbReference>
<dbReference type="NCBIfam" id="TIGR00079">
    <property type="entry name" value="pept_deformyl"/>
    <property type="match status" value="1"/>
</dbReference>
<dbReference type="NCBIfam" id="NF001159">
    <property type="entry name" value="PRK00150.1-3"/>
    <property type="match status" value="1"/>
</dbReference>
<dbReference type="PANTHER" id="PTHR10458">
    <property type="entry name" value="PEPTIDE DEFORMYLASE"/>
    <property type="match status" value="1"/>
</dbReference>
<dbReference type="PANTHER" id="PTHR10458:SF22">
    <property type="entry name" value="PEPTIDE DEFORMYLASE"/>
    <property type="match status" value="1"/>
</dbReference>
<dbReference type="Pfam" id="PF01327">
    <property type="entry name" value="Pep_deformylase"/>
    <property type="match status" value="1"/>
</dbReference>
<dbReference type="PIRSF" id="PIRSF004749">
    <property type="entry name" value="Pep_def"/>
    <property type="match status" value="1"/>
</dbReference>
<dbReference type="PRINTS" id="PR01576">
    <property type="entry name" value="PDEFORMYLASE"/>
</dbReference>
<dbReference type="SUPFAM" id="SSF56420">
    <property type="entry name" value="Peptide deformylase"/>
    <property type="match status" value="1"/>
</dbReference>
<accession>Q92HU7</accession>
<feature type="chain" id="PRO_0000082895" description="Peptide deformylase-like">
    <location>
        <begin position="1"/>
        <end position="183"/>
    </location>
</feature>
<feature type="active site" evidence="1">
    <location>
        <position position="140"/>
    </location>
</feature>
<organism>
    <name type="scientific">Rickettsia conorii (strain ATCC VR-613 / Malish 7)</name>
    <dbReference type="NCBI Taxonomy" id="272944"/>
    <lineage>
        <taxon>Bacteria</taxon>
        <taxon>Pseudomonadati</taxon>
        <taxon>Pseudomonadota</taxon>
        <taxon>Alphaproteobacteria</taxon>
        <taxon>Rickettsiales</taxon>
        <taxon>Rickettsiaceae</taxon>
        <taxon>Rickettsieae</taxon>
        <taxon>Rickettsia</taxon>
        <taxon>spotted fever group</taxon>
    </lineage>
</organism>
<evidence type="ECO:0000255" key="1">
    <source>
        <dbReference type="HAMAP-Rule" id="MF_00163"/>
    </source>
</evidence>
<reference key="1">
    <citation type="journal article" date="2001" name="Science">
        <title>Mechanisms of evolution in Rickettsia conorii and R. prowazekii.</title>
        <authorList>
            <person name="Ogata H."/>
            <person name="Audic S."/>
            <person name="Renesto-Audiffren P."/>
            <person name="Fournier P.-E."/>
            <person name="Barbe V."/>
            <person name="Samson D."/>
            <person name="Roux V."/>
            <person name="Cossart P."/>
            <person name="Weissenbach J."/>
            <person name="Claverie J.-M."/>
            <person name="Raoult D."/>
        </authorList>
    </citation>
    <scope>NUCLEOTIDE SEQUENCE [LARGE SCALE GENOMIC DNA]</scope>
    <source>
        <strain>ATCC VR-613 / Malish 7</strain>
    </source>
</reference>
<comment type="similarity">
    <text evidence="1">Belongs to the polypeptide deformylase family.</text>
</comment>
<name>DEFL_RICCN</name>
<protein>
    <recommendedName>
        <fullName evidence="1">Peptide deformylase-like</fullName>
    </recommendedName>
    <alternativeName>
        <fullName evidence="1">Polypeptide deformylase-like</fullName>
    </alternativeName>
</protein>
<proteinExistence type="inferred from homology"/>
<sequence length="183" mass="20878">MNQDKPYYQIVYAPNDIFKKQAEYIDIVDDNIRTIVDKMLQNLHIERAVGLGANMVGILKRIAVVDLHENNKSSPIVFINPNITYFSEEKQTFIEGSLSFPGIEASITRSKAIKVKYLDYNGNKQELAAEGFLATVIQHEIEYLNGKTFLDSLSKLKRDTLLKKMLKHIKLHPPHIHGSGCRH</sequence>
<gene>
    <name type="ordered locus">RC0674</name>
</gene>